<name>SYA_ACIBC</name>
<organism>
    <name type="scientific">Acinetobacter baumannii (strain ACICU)</name>
    <dbReference type="NCBI Taxonomy" id="405416"/>
    <lineage>
        <taxon>Bacteria</taxon>
        <taxon>Pseudomonadati</taxon>
        <taxon>Pseudomonadota</taxon>
        <taxon>Gammaproteobacteria</taxon>
        <taxon>Moraxellales</taxon>
        <taxon>Moraxellaceae</taxon>
        <taxon>Acinetobacter</taxon>
        <taxon>Acinetobacter calcoaceticus/baumannii complex</taxon>
    </lineage>
</organism>
<feature type="chain" id="PRO_0000347473" description="Alanine--tRNA ligase">
    <location>
        <begin position="1"/>
        <end position="878"/>
    </location>
</feature>
<feature type="binding site" evidence="1">
    <location>
        <position position="562"/>
    </location>
    <ligand>
        <name>Zn(2+)</name>
        <dbReference type="ChEBI" id="CHEBI:29105"/>
    </ligand>
</feature>
<feature type="binding site" evidence="1">
    <location>
        <position position="566"/>
    </location>
    <ligand>
        <name>Zn(2+)</name>
        <dbReference type="ChEBI" id="CHEBI:29105"/>
    </ligand>
</feature>
<feature type="binding site" evidence="1">
    <location>
        <position position="670"/>
    </location>
    <ligand>
        <name>Zn(2+)</name>
        <dbReference type="ChEBI" id="CHEBI:29105"/>
    </ligand>
</feature>
<feature type="binding site" evidence="1">
    <location>
        <position position="674"/>
    </location>
    <ligand>
        <name>Zn(2+)</name>
        <dbReference type="ChEBI" id="CHEBI:29105"/>
    </ligand>
</feature>
<accession>B2HWK7</accession>
<keyword id="KW-0030">Aminoacyl-tRNA synthetase</keyword>
<keyword id="KW-0067">ATP-binding</keyword>
<keyword id="KW-0963">Cytoplasm</keyword>
<keyword id="KW-0436">Ligase</keyword>
<keyword id="KW-0479">Metal-binding</keyword>
<keyword id="KW-0547">Nucleotide-binding</keyword>
<keyword id="KW-0648">Protein biosynthesis</keyword>
<keyword id="KW-0694">RNA-binding</keyword>
<keyword id="KW-0820">tRNA-binding</keyword>
<keyword id="KW-0862">Zinc</keyword>
<proteinExistence type="inferred from homology"/>
<sequence>MTSAEIREAFLRYFETQGHTRVASSSLVPANDPTLLFTNAGMNQFKDCFLGLEKRDYVRATTSQKCVRAGGKHNDLDNVGYTARHHTFFEMLGNFSFGDYFKRDALKFAWEFLTSEQWLALPKDKLYVTVYHTDDEAYDIWNKEIGLAPERIIRIGDNKGEKYASDNFWAMGDTGPCGPCSEIFFDHGEHIWGGLPGSPEEDGDRFIEIWNNVFMQFNRTADGVLHPLPAPSVDTGMGLERISAVLQHVNSNYDIDLFQHLLKAAANIIGIEDEGQPSLRVVADHARSCCFLIADGVNPSNEGRGYVLRRIIRRAVRHGNKLGATGTFFYKMLQPLIEVMGQAYPELEARREVIEATLIREEEQFAKTLEQGLKLLEGELAQLKDKTIPGATVFKLYDTYGFPTDLTADIARERGFIIDEAGFEVEMAAQRQRARDAGKFAVDYNNIVKVEGETQFDGYTNTTGQGQIVAIYKDGVQVDEVSEGDEALIVLNQTPFYAESGGQIGDTGIFKNETGIFEVQDTKKSGGAFVHQGIVTVGNLKTSQNVEAIVKADIREATARNHSATHLLHAALRQILGSHVQQKGSLVASDILRFDFANDQPVSFEQLQQVERLVNAEIIANTAVTTELLDIETAKAKGAMMLFGEKYGDEVRVLSMGSVIDEKNFSIELCGGIHVKRTGDIGLFKITSEGGVAAGVRRIEAVTGTKALEVVQKADHDIQHINSLLKAQKDQTVERVQANVELVSALQKQIEQLNQKLANFQAADLIDQVQTIAGRQTLITTVQGVDAKALRNLHDSVKSKLENAVIVLAGVEGDKVSLLASVASQYTANLKAGDIIKHLATELGGKGGGKPDLAQGGAPLNEKFGQVMAALPAWLEQK</sequence>
<gene>
    <name evidence="1" type="primary">alaS</name>
    <name type="ordered locus">ACICU_01154</name>
</gene>
<evidence type="ECO:0000255" key="1">
    <source>
        <dbReference type="HAMAP-Rule" id="MF_00036"/>
    </source>
</evidence>
<evidence type="ECO:0000305" key="2"/>
<protein>
    <recommendedName>
        <fullName evidence="1">Alanine--tRNA ligase</fullName>
        <ecNumber evidence="1">6.1.1.7</ecNumber>
    </recommendedName>
    <alternativeName>
        <fullName evidence="1">Alanyl-tRNA synthetase</fullName>
        <shortName evidence="1">AlaRS</shortName>
    </alternativeName>
</protein>
<comment type="function">
    <text evidence="1">Catalyzes the attachment of alanine to tRNA(Ala) in a two-step reaction: alanine is first activated by ATP to form Ala-AMP and then transferred to the acceptor end of tRNA(Ala). Also edits incorrectly charged Ser-tRNA(Ala) and Gly-tRNA(Ala) via its editing domain.</text>
</comment>
<comment type="catalytic activity">
    <reaction evidence="1">
        <text>tRNA(Ala) + L-alanine + ATP = L-alanyl-tRNA(Ala) + AMP + diphosphate</text>
        <dbReference type="Rhea" id="RHEA:12540"/>
        <dbReference type="Rhea" id="RHEA-COMP:9657"/>
        <dbReference type="Rhea" id="RHEA-COMP:9923"/>
        <dbReference type="ChEBI" id="CHEBI:30616"/>
        <dbReference type="ChEBI" id="CHEBI:33019"/>
        <dbReference type="ChEBI" id="CHEBI:57972"/>
        <dbReference type="ChEBI" id="CHEBI:78442"/>
        <dbReference type="ChEBI" id="CHEBI:78497"/>
        <dbReference type="ChEBI" id="CHEBI:456215"/>
        <dbReference type="EC" id="6.1.1.7"/>
    </reaction>
</comment>
<comment type="cofactor">
    <cofactor evidence="1">
        <name>Zn(2+)</name>
        <dbReference type="ChEBI" id="CHEBI:29105"/>
    </cofactor>
    <text evidence="1">Binds 1 zinc ion per subunit.</text>
</comment>
<comment type="subcellular location">
    <subcellularLocation>
        <location evidence="1">Cytoplasm</location>
    </subcellularLocation>
</comment>
<comment type="domain">
    <text evidence="1">Consists of three domains; the N-terminal catalytic domain, the editing domain and the C-terminal C-Ala domain. The editing domain removes incorrectly charged amino acids, while the C-Ala domain, along with tRNA(Ala), serves as a bridge to cooperatively bring together the editing and aminoacylation centers thus stimulating deacylation of misacylated tRNAs.</text>
</comment>
<comment type="similarity">
    <text evidence="1">Belongs to the class-II aminoacyl-tRNA synthetase family.</text>
</comment>
<comment type="sequence caution" evidence="2">
    <conflict type="erroneous initiation">
        <sequence resource="EMBL-CDS" id="ACC56466"/>
    </conflict>
</comment>
<dbReference type="EC" id="6.1.1.7" evidence="1"/>
<dbReference type="EMBL" id="CP000863">
    <property type="protein sequence ID" value="ACC56466.1"/>
    <property type="status" value="ALT_INIT"/>
    <property type="molecule type" value="Genomic_DNA"/>
</dbReference>
<dbReference type="RefSeq" id="WP_000199457.1">
    <property type="nucleotide sequence ID" value="NZ_CP031380.1"/>
</dbReference>
<dbReference type="SMR" id="B2HWK7"/>
<dbReference type="KEGG" id="abc:ACICU_01154"/>
<dbReference type="HOGENOM" id="CLU_004485_1_1_6"/>
<dbReference type="Proteomes" id="UP000008839">
    <property type="component" value="Chromosome"/>
</dbReference>
<dbReference type="GO" id="GO:0005829">
    <property type="term" value="C:cytosol"/>
    <property type="evidence" value="ECO:0007669"/>
    <property type="project" value="TreeGrafter"/>
</dbReference>
<dbReference type="GO" id="GO:0004813">
    <property type="term" value="F:alanine-tRNA ligase activity"/>
    <property type="evidence" value="ECO:0007669"/>
    <property type="project" value="UniProtKB-UniRule"/>
</dbReference>
<dbReference type="GO" id="GO:0002161">
    <property type="term" value="F:aminoacyl-tRNA deacylase activity"/>
    <property type="evidence" value="ECO:0007669"/>
    <property type="project" value="TreeGrafter"/>
</dbReference>
<dbReference type="GO" id="GO:0005524">
    <property type="term" value="F:ATP binding"/>
    <property type="evidence" value="ECO:0007669"/>
    <property type="project" value="UniProtKB-UniRule"/>
</dbReference>
<dbReference type="GO" id="GO:0000049">
    <property type="term" value="F:tRNA binding"/>
    <property type="evidence" value="ECO:0007669"/>
    <property type="project" value="UniProtKB-KW"/>
</dbReference>
<dbReference type="GO" id="GO:0008270">
    <property type="term" value="F:zinc ion binding"/>
    <property type="evidence" value="ECO:0007669"/>
    <property type="project" value="UniProtKB-UniRule"/>
</dbReference>
<dbReference type="GO" id="GO:0006419">
    <property type="term" value="P:alanyl-tRNA aminoacylation"/>
    <property type="evidence" value="ECO:0007669"/>
    <property type="project" value="UniProtKB-UniRule"/>
</dbReference>
<dbReference type="GO" id="GO:0045892">
    <property type="term" value="P:negative regulation of DNA-templated transcription"/>
    <property type="evidence" value="ECO:0007669"/>
    <property type="project" value="TreeGrafter"/>
</dbReference>
<dbReference type="CDD" id="cd00673">
    <property type="entry name" value="AlaRS_core"/>
    <property type="match status" value="1"/>
</dbReference>
<dbReference type="FunFam" id="2.40.30.130:FF:000001">
    <property type="entry name" value="Alanine--tRNA ligase"/>
    <property type="match status" value="1"/>
</dbReference>
<dbReference type="FunFam" id="3.10.310.40:FF:000001">
    <property type="entry name" value="Alanine--tRNA ligase"/>
    <property type="match status" value="1"/>
</dbReference>
<dbReference type="FunFam" id="3.30.54.20:FF:000001">
    <property type="entry name" value="Alanine--tRNA ligase"/>
    <property type="match status" value="1"/>
</dbReference>
<dbReference type="FunFam" id="3.30.930.10:FF:000004">
    <property type="entry name" value="Alanine--tRNA ligase"/>
    <property type="match status" value="1"/>
</dbReference>
<dbReference type="FunFam" id="3.30.980.10:FF:000004">
    <property type="entry name" value="Alanine--tRNA ligase, cytoplasmic"/>
    <property type="match status" value="1"/>
</dbReference>
<dbReference type="Gene3D" id="2.40.30.130">
    <property type="match status" value="1"/>
</dbReference>
<dbReference type="Gene3D" id="3.10.310.40">
    <property type="match status" value="1"/>
</dbReference>
<dbReference type="Gene3D" id="3.30.54.20">
    <property type="match status" value="1"/>
</dbReference>
<dbReference type="Gene3D" id="6.10.250.550">
    <property type="match status" value="1"/>
</dbReference>
<dbReference type="Gene3D" id="3.30.930.10">
    <property type="entry name" value="Bira Bifunctional Protein, Domain 2"/>
    <property type="match status" value="1"/>
</dbReference>
<dbReference type="Gene3D" id="3.30.980.10">
    <property type="entry name" value="Threonyl-trna Synthetase, Chain A, domain 2"/>
    <property type="match status" value="1"/>
</dbReference>
<dbReference type="HAMAP" id="MF_00036_B">
    <property type="entry name" value="Ala_tRNA_synth_B"/>
    <property type="match status" value="1"/>
</dbReference>
<dbReference type="InterPro" id="IPR045864">
    <property type="entry name" value="aa-tRNA-synth_II/BPL/LPL"/>
</dbReference>
<dbReference type="InterPro" id="IPR002318">
    <property type="entry name" value="Ala-tRNA-lgiase_IIc"/>
</dbReference>
<dbReference type="InterPro" id="IPR018162">
    <property type="entry name" value="Ala-tRNA-ligase_IIc_anticod-bd"/>
</dbReference>
<dbReference type="InterPro" id="IPR018165">
    <property type="entry name" value="Ala-tRNA-synth_IIc_core"/>
</dbReference>
<dbReference type="InterPro" id="IPR018164">
    <property type="entry name" value="Ala-tRNA-synth_IIc_N"/>
</dbReference>
<dbReference type="InterPro" id="IPR050058">
    <property type="entry name" value="Ala-tRNA_ligase"/>
</dbReference>
<dbReference type="InterPro" id="IPR023033">
    <property type="entry name" value="Ala_tRNA_ligase_euk/bac"/>
</dbReference>
<dbReference type="InterPro" id="IPR003156">
    <property type="entry name" value="DHHA1_dom"/>
</dbReference>
<dbReference type="InterPro" id="IPR018163">
    <property type="entry name" value="Thr/Ala-tRNA-synth_IIc_edit"/>
</dbReference>
<dbReference type="InterPro" id="IPR009000">
    <property type="entry name" value="Transl_B-barrel_sf"/>
</dbReference>
<dbReference type="InterPro" id="IPR012947">
    <property type="entry name" value="tRNA_SAD"/>
</dbReference>
<dbReference type="NCBIfam" id="TIGR00344">
    <property type="entry name" value="alaS"/>
    <property type="match status" value="1"/>
</dbReference>
<dbReference type="PANTHER" id="PTHR11777:SF9">
    <property type="entry name" value="ALANINE--TRNA LIGASE, CYTOPLASMIC"/>
    <property type="match status" value="1"/>
</dbReference>
<dbReference type="PANTHER" id="PTHR11777">
    <property type="entry name" value="ALANYL-TRNA SYNTHETASE"/>
    <property type="match status" value="1"/>
</dbReference>
<dbReference type="Pfam" id="PF02272">
    <property type="entry name" value="DHHA1"/>
    <property type="match status" value="1"/>
</dbReference>
<dbReference type="Pfam" id="PF01411">
    <property type="entry name" value="tRNA-synt_2c"/>
    <property type="match status" value="1"/>
</dbReference>
<dbReference type="Pfam" id="PF07973">
    <property type="entry name" value="tRNA_SAD"/>
    <property type="match status" value="1"/>
</dbReference>
<dbReference type="PRINTS" id="PR00980">
    <property type="entry name" value="TRNASYNTHALA"/>
</dbReference>
<dbReference type="SMART" id="SM00863">
    <property type="entry name" value="tRNA_SAD"/>
    <property type="match status" value="1"/>
</dbReference>
<dbReference type="SUPFAM" id="SSF55681">
    <property type="entry name" value="Class II aaRS and biotin synthetases"/>
    <property type="match status" value="1"/>
</dbReference>
<dbReference type="SUPFAM" id="SSF101353">
    <property type="entry name" value="Putative anticodon-binding domain of alanyl-tRNA synthetase (AlaRS)"/>
    <property type="match status" value="1"/>
</dbReference>
<dbReference type="SUPFAM" id="SSF55186">
    <property type="entry name" value="ThrRS/AlaRS common domain"/>
    <property type="match status" value="1"/>
</dbReference>
<dbReference type="SUPFAM" id="SSF50447">
    <property type="entry name" value="Translation proteins"/>
    <property type="match status" value="1"/>
</dbReference>
<dbReference type="PROSITE" id="PS50860">
    <property type="entry name" value="AA_TRNA_LIGASE_II_ALA"/>
    <property type="match status" value="1"/>
</dbReference>
<reference key="1">
    <citation type="journal article" date="2008" name="Antimicrob. Agents Chemother.">
        <title>Whole-genome pyrosequencing of an epidemic multidrug-resistant Acinetobacter baumannii strain belonging to the European clone II group.</title>
        <authorList>
            <person name="Iacono M."/>
            <person name="Villa L."/>
            <person name="Fortini D."/>
            <person name="Bordoni R."/>
            <person name="Imperi F."/>
            <person name="Bonnal R.J."/>
            <person name="Sicheritz-Ponten T."/>
            <person name="De Bellis G."/>
            <person name="Visca P."/>
            <person name="Cassone A."/>
            <person name="Carattoli A."/>
        </authorList>
    </citation>
    <scope>NUCLEOTIDE SEQUENCE [LARGE SCALE GENOMIC DNA]</scope>
    <source>
        <strain>ACICU</strain>
    </source>
</reference>